<organism evidence="5">
    <name type="scientific">Amolops mantzorum</name>
    <name type="common">Sichuan torrent frog</name>
    <dbReference type="NCBI Taxonomy" id="167930"/>
    <lineage>
        <taxon>Eukaryota</taxon>
        <taxon>Metazoa</taxon>
        <taxon>Chordata</taxon>
        <taxon>Craniata</taxon>
        <taxon>Vertebrata</taxon>
        <taxon>Euteleostomi</taxon>
        <taxon>Amphibia</taxon>
        <taxon>Batrachia</taxon>
        <taxon>Anura</taxon>
        <taxon>Neobatrachia</taxon>
        <taxon>Ranoidea</taxon>
        <taxon>Ranidae</taxon>
        <taxon>Amolops</taxon>
    </lineage>
</organism>
<reference evidence="5" key="1">
    <citation type="journal article" date="2014" name="Zool. Sci.">
        <title>Peptidomic analysis of antimicrobial peptides in skin secretions of Amolops mantzorum.</title>
        <authorList>
            <person name="Hu Y."/>
            <person name="Yu Z."/>
            <person name="Xu S."/>
            <person name="Hu Y."/>
            <person name="Guo C."/>
            <person name="Li F."/>
            <person name="Li J."/>
            <person name="Liu J."/>
            <person name="Wang H."/>
        </authorList>
    </citation>
    <scope>NUCLEOTIDE SEQUENCE [MRNA]</scope>
    <scope>PROTEIN SEQUENCE OF 42-74</scope>
    <scope>SYNTHESIS OF 42-74</scope>
    <scope>FUNCTION</scope>
    <scope>SUBCELLULAR LOCATION</scope>
    <scope>DISULFIDE BOND</scope>
    <scope>IDENTIFICATION BY MASS SPECTROMETRY</scope>
    <source>
        <tissue evidence="3">Skin</tissue>
        <tissue evidence="3">Skin secretion</tissue>
    </source>
</reference>
<dbReference type="EMBL" id="HQ026140">
    <property type="protein sequence ID" value="ADM34239.1"/>
    <property type="molecule type" value="mRNA"/>
</dbReference>
<dbReference type="GO" id="GO:0005576">
    <property type="term" value="C:extracellular region"/>
    <property type="evidence" value="ECO:0007669"/>
    <property type="project" value="UniProtKB-SubCell"/>
</dbReference>
<dbReference type="GO" id="GO:0042742">
    <property type="term" value="P:defense response to bacterium"/>
    <property type="evidence" value="ECO:0007669"/>
    <property type="project" value="UniProtKB-KW"/>
</dbReference>
<dbReference type="GO" id="GO:0050832">
    <property type="term" value="P:defense response to fungus"/>
    <property type="evidence" value="ECO:0007669"/>
    <property type="project" value="UniProtKB-KW"/>
</dbReference>
<dbReference type="GO" id="GO:0031640">
    <property type="term" value="P:killing of cells of another organism"/>
    <property type="evidence" value="ECO:0007669"/>
    <property type="project" value="UniProtKB-KW"/>
</dbReference>
<dbReference type="InterPro" id="IPR012521">
    <property type="entry name" value="Antimicrobial_frog_2"/>
</dbReference>
<dbReference type="InterPro" id="IPR004275">
    <property type="entry name" value="Frog_antimicrobial_propeptide"/>
</dbReference>
<dbReference type="Pfam" id="PF08023">
    <property type="entry name" value="Antimicrobial_2"/>
    <property type="match status" value="1"/>
</dbReference>
<dbReference type="Pfam" id="PF03032">
    <property type="entry name" value="FSAP_sig_propep"/>
    <property type="match status" value="1"/>
</dbReference>
<evidence type="ECO:0000255" key="1"/>
<evidence type="ECO:0000269" key="2">
    <source>
    </source>
</evidence>
<evidence type="ECO:0000303" key="3">
    <source>
    </source>
</evidence>
<evidence type="ECO:0000305" key="4">
    <source>
    </source>
</evidence>
<evidence type="ECO:0000312" key="5">
    <source>
        <dbReference type="EMBL" id="ADM34239.1"/>
    </source>
</evidence>
<protein>
    <recommendedName>
        <fullName evidence="3">Brevinin-2MT1</fullName>
    </recommendedName>
</protein>
<name>BR21_AMOMA</name>
<proteinExistence type="evidence at protein level"/>
<accession>E1AXF5</accession>
<sequence>MFTMKKSLLVLFFLGTISLSLCEEERNADEDDGEMTEEEKRGLLSTFKQVGISALQGAAQGLLNTLSCKIAKTC</sequence>
<feature type="signal peptide" evidence="1">
    <location>
        <begin position="1"/>
        <end position="22"/>
    </location>
</feature>
<feature type="propeptide" id="PRO_0000440078" description="Removed in mature form" evidence="4">
    <location>
        <begin position="23"/>
        <end position="39"/>
    </location>
</feature>
<feature type="peptide" id="PRO_0000440079" description="Brevinin-2MT1" evidence="2">
    <location>
        <begin position="42"/>
        <end position="74"/>
    </location>
</feature>
<feature type="disulfide bond" evidence="2">
    <location>
        <begin position="68"/>
        <end position="74"/>
    </location>
</feature>
<comment type="function">
    <text evidence="2">Antimicrobial peptide. Active against a variety of Gram-negative and Gram-positive bacterial strains. Active against fungi. Shows hemolytic activity against human erythrocytes.</text>
</comment>
<comment type="subcellular location">
    <subcellularLocation>
        <location evidence="1 2">Secreted</location>
    </subcellularLocation>
</comment>
<comment type="tissue specificity">
    <text evidence="4">Expressed by the skin glands.</text>
</comment>
<comment type="similarity">
    <text evidence="1">Belongs to the frog skin active peptide (FSAP) family. Brevinin subfamily.</text>
</comment>
<keyword id="KW-0878">Amphibian defense peptide</keyword>
<keyword id="KW-0044">Antibiotic</keyword>
<keyword id="KW-0929">Antimicrobial</keyword>
<keyword id="KW-0165">Cleavage on pair of basic residues</keyword>
<keyword id="KW-0204">Cytolysis</keyword>
<keyword id="KW-0903">Direct protein sequencing</keyword>
<keyword id="KW-1015">Disulfide bond</keyword>
<keyword id="KW-0295">Fungicide</keyword>
<keyword id="KW-0354">Hemolysis</keyword>
<keyword id="KW-0964">Secreted</keyword>
<keyword id="KW-0732">Signal</keyword>